<reference key="1">
    <citation type="journal article" date="2005" name="Infect. Immun.">
        <title>Comparative genomic analysis of Chlamydia trachomatis oculotropic and genitotropic strains.</title>
        <authorList>
            <person name="Carlson J.H."/>
            <person name="Porcella S.F."/>
            <person name="McClarty G."/>
            <person name="Caldwell H.D."/>
        </authorList>
    </citation>
    <scope>NUCLEOTIDE SEQUENCE [LARGE SCALE GENOMIC DNA]</scope>
    <source>
        <strain>ATCC VR-571B / DSM 19440 / HAR-13</strain>
    </source>
</reference>
<accession>Q3KLR2</accession>
<gene>
    <name evidence="1" type="primary">rpsG</name>
    <name type="ordered locus">CTA_0478</name>
</gene>
<protein>
    <recommendedName>
        <fullName evidence="1">Small ribosomal subunit protein uS7</fullName>
    </recommendedName>
    <alternativeName>
        <fullName evidence="2">30S ribosomal protein S7</fullName>
    </alternativeName>
</protein>
<sequence>MSRRHAAEKKVIPGDPVYGSVVLERFINKVMLHGKKSIARKIVYGALERFAKRLGLENPLEGFEEALENAKPVLEVRSRRVGGATYQVPVEVAPDRRSCLAMQWIIKHARSKPGKCMEVGLANELIDCFNKQGATIKKREDTHRMAEANKAFAHYKW</sequence>
<feature type="chain" id="PRO_0000226490" description="Small ribosomal subunit protein uS7">
    <location>
        <begin position="1"/>
        <end position="157"/>
    </location>
</feature>
<proteinExistence type="inferred from homology"/>
<evidence type="ECO:0000255" key="1">
    <source>
        <dbReference type="HAMAP-Rule" id="MF_00480"/>
    </source>
</evidence>
<evidence type="ECO:0000305" key="2"/>
<name>RS7_CHLTA</name>
<comment type="function">
    <text evidence="1">One of the primary rRNA binding proteins, it binds directly to 16S rRNA where it nucleates assembly of the head domain of the 30S subunit. Is located at the subunit interface close to the decoding center, probably blocks exit of the E-site tRNA.</text>
</comment>
<comment type="subunit">
    <text evidence="1">Part of the 30S ribosomal subunit. Contacts proteins S9 and S11.</text>
</comment>
<comment type="similarity">
    <text evidence="1">Belongs to the universal ribosomal protein uS7 family.</text>
</comment>
<dbReference type="EMBL" id="CP000051">
    <property type="protein sequence ID" value="AAX50710.1"/>
    <property type="molecule type" value="Genomic_DNA"/>
</dbReference>
<dbReference type="RefSeq" id="WP_009871793.1">
    <property type="nucleotide sequence ID" value="NC_007429.1"/>
</dbReference>
<dbReference type="SMR" id="Q3KLR2"/>
<dbReference type="KEGG" id="cta:CTA_0478"/>
<dbReference type="HOGENOM" id="CLU_072226_1_1_0"/>
<dbReference type="Proteomes" id="UP000002532">
    <property type="component" value="Chromosome"/>
</dbReference>
<dbReference type="GO" id="GO:0015935">
    <property type="term" value="C:small ribosomal subunit"/>
    <property type="evidence" value="ECO:0007669"/>
    <property type="project" value="InterPro"/>
</dbReference>
<dbReference type="GO" id="GO:0019843">
    <property type="term" value="F:rRNA binding"/>
    <property type="evidence" value="ECO:0007669"/>
    <property type="project" value="UniProtKB-UniRule"/>
</dbReference>
<dbReference type="GO" id="GO:0003735">
    <property type="term" value="F:structural constituent of ribosome"/>
    <property type="evidence" value="ECO:0007669"/>
    <property type="project" value="InterPro"/>
</dbReference>
<dbReference type="GO" id="GO:0000049">
    <property type="term" value="F:tRNA binding"/>
    <property type="evidence" value="ECO:0007669"/>
    <property type="project" value="UniProtKB-UniRule"/>
</dbReference>
<dbReference type="GO" id="GO:0006412">
    <property type="term" value="P:translation"/>
    <property type="evidence" value="ECO:0007669"/>
    <property type="project" value="UniProtKB-UniRule"/>
</dbReference>
<dbReference type="CDD" id="cd14869">
    <property type="entry name" value="uS7_Bacteria"/>
    <property type="match status" value="1"/>
</dbReference>
<dbReference type="FunFam" id="1.10.455.10:FF:000001">
    <property type="entry name" value="30S ribosomal protein S7"/>
    <property type="match status" value="1"/>
</dbReference>
<dbReference type="Gene3D" id="1.10.455.10">
    <property type="entry name" value="Ribosomal protein S7 domain"/>
    <property type="match status" value="1"/>
</dbReference>
<dbReference type="HAMAP" id="MF_00480_B">
    <property type="entry name" value="Ribosomal_uS7_B"/>
    <property type="match status" value="1"/>
</dbReference>
<dbReference type="InterPro" id="IPR000235">
    <property type="entry name" value="Ribosomal_uS7"/>
</dbReference>
<dbReference type="InterPro" id="IPR005717">
    <property type="entry name" value="Ribosomal_uS7_bac/org-type"/>
</dbReference>
<dbReference type="InterPro" id="IPR020606">
    <property type="entry name" value="Ribosomal_uS7_CS"/>
</dbReference>
<dbReference type="InterPro" id="IPR023798">
    <property type="entry name" value="Ribosomal_uS7_dom"/>
</dbReference>
<dbReference type="InterPro" id="IPR036823">
    <property type="entry name" value="Ribosomal_uS7_dom_sf"/>
</dbReference>
<dbReference type="NCBIfam" id="TIGR01029">
    <property type="entry name" value="rpsG_bact"/>
    <property type="match status" value="1"/>
</dbReference>
<dbReference type="PANTHER" id="PTHR11205">
    <property type="entry name" value="RIBOSOMAL PROTEIN S7"/>
    <property type="match status" value="1"/>
</dbReference>
<dbReference type="Pfam" id="PF00177">
    <property type="entry name" value="Ribosomal_S7"/>
    <property type="match status" value="1"/>
</dbReference>
<dbReference type="PIRSF" id="PIRSF002122">
    <property type="entry name" value="RPS7p_RPS7a_RPS5e_RPS7o"/>
    <property type="match status" value="1"/>
</dbReference>
<dbReference type="SUPFAM" id="SSF47973">
    <property type="entry name" value="Ribosomal protein S7"/>
    <property type="match status" value="1"/>
</dbReference>
<dbReference type="PROSITE" id="PS00052">
    <property type="entry name" value="RIBOSOMAL_S7"/>
    <property type="match status" value="1"/>
</dbReference>
<organism>
    <name type="scientific">Chlamydia trachomatis serovar A (strain ATCC VR-571B / DSM 19440 / HAR-13)</name>
    <dbReference type="NCBI Taxonomy" id="315277"/>
    <lineage>
        <taxon>Bacteria</taxon>
        <taxon>Pseudomonadati</taxon>
        <taxon>Chlamydiota</taxon>
        <taxon>Chlamydiia</taxon>
        <taxon>Chlamydiales</taxon>
        <taxon>Chlamydiaceae</taxon>
        <taxon>Chlamydia/Chlamydophila group</taxon>
        <taxon>Chlamydia</taxon>
    </lineage>
</organism>
<keyword id="KW-0687">Ribonucleoprotein</keyword>
<keyword id="KW-0689">Ribosomal protein</keyword>
<keyword id="KW-0694">RNA-binding</keyword>
<keyword id="KW-0699">rRNA-binding</keyword>
<keyword id="KW-0820">tRNA-binding</keyword>